<protein>
    <recommendedName>
        <fullName>NADP-reducing hydrogenase subunit HndC</fullName>
        <ecNumber evidence="3">1.12.1.3</ecNumber>
    </recommendedName>
    <alternativeName>
        <fullName>Hydrogen dehydrogenase (NADP(+))</fullName>
    </alternativeName>
</protein>
<accession>Q46507</accession>
<sequence>MAATTTEKKQLRIATRNCGFIDPESIDDYIALRGYEGLAKVLTMTPAEVVDLVKRSGLRGRGGAGFPTGIKWGIALGNKADQKYMVCNADEGDPEFMDRAVLEGDPHSVVEAMAIGGYAIGATRGTVYIRAEYPLAIKRLKKAIDDAREYGLLGENIFGSGFDFDIELKYGAGAFVCGEETALIRSMEGKRGEPVTKPPFPAQSGYWEKPTIVNNVETFANIPAIIINGADWFSGIGTATSKGTKVFALAGKIQNVGLIEVPMGISLREVIFDIGGGCPDGKAFKAVQTGGPSGGALANKDLDVAIDYESLAACKSIMGSGGMVVMDEDDCMVSVAKFFLDFTMDETCGKCTPCRIGSKRLYEILDRITKGKGTRADLDRLKSLSEIIKDTALCGLGQTMPNPILSTMDTFANEYEAHVDDKKCPAHVCTALLTYTIDPAKCTGCGLCTRVCPVECISGTKKQPHTIDTTRCIKCGACYDKCKFDSIIKQ</sequence>
<comment type="function">
    <text evidence="2 3">Catalyzes the reduction of NADP in the presence of molecular H2 to yield NADPH.</text>
</comment>
<comment type="catalytic activity">
    <reaction evidence="3">
        <text>H2 + NADP(+) = NADPH + H(+)</text>
        <dbReference type="Rhea" id="RHEA:18637"/>
        <dbReference type="ChEBI" id="CHEBI:15378"/>
        <dbReference type="ChEBI" id="CHEBI:18276"/>
        <dbReference type="ChEBI" id="CHEBI:57783"/>
        <dbReference type="ChEBI" id="CHEBI:58349"/>
        <dbReference type="EC" id="1.12.1.3"/>
    </reaction>
</comment>
<comment type="activity regulation">
    <text evidence="3">Inhibited by oxygen.</text>
</comment>
<comment type="biophysicochemical properties">
    <kinetics>
        <KM evidence="3">0.09 mM for NADP (at 30 degrees Celsius and at pH 8)</KM>
        <Vmax evidence="3">0.013 umol/min/mg enzyme (at 30 degrees Celsius and at pH 8)</Vmax>
    </kinetics>
    <phDependence>
        <text evidence="3">Optimum pH is 8.</text>
    </phDependence>
</comment>
<comment type="subunit">
    <text evidence="3">Heterotetramer composed of HndA, HndB, HndC and HndD subunits. HndC is probably the reducing subunit.</text>
</comment>
<comment type="disruption phenotype">
    <text evidence="2">Disruption completely abolishes the NADP reductase activity.</text>
</comment>
<comment type="similarity">
    <text evidence="4">Belongs to the complex I 51 kDa subunit family.</text>
</comment>
<name>HNDC_SOLFR</name>
<evidence type="ECO:0000255" key="1">
    <source>
        <dbReference type="PROSITE-ProRule" id="PRU00711"/>
    </source>
</evidence>
<evidence type="ECO:0000269" key="2">
    <source>
    </source>
</evidence>
<evidence type="ECO:0000269" key="3">
    <source>
    </source>
</evidence>
<evidence type="ECO:0000305" key="4"/>
<dbReference type="EC" id="1.12.1.3" evidence="3"/>
<dbReference type="EMBL" id="U07229">
    <property type="protein sequence ID" value="AAA87056.1"/>
    <property type="molecule type" value="Genomic_DNA"/>
</dbReference>
<dbReference type="PIR" id="C57150">
    <property type="entry name" value="C57150"/>
</dbReference>
<dbReference type="SMR" id="Q46507"/>
<dbReference type="KEGG" id="ag:AAA87056"/>
<dbReference type="GO" id="GO:0051539">
    <property type="term" value="F:4 iron, 4 sulfur cluster binding"/>
    <property type="evidence" value="ECO:0007669"/>
    <property type="project" value="UniProtKB-KW"/>
</dbReference>
<dbReference type="GO" id="GO:0010181">
    <property type="term" value="F:FMN binding"/>
    <property type="evidence" value="ECO:0007669"/>
    <property type="project" value="InterPro"/>
</dbReference>
<dbReference type="GO" id="GO:0050583">
    <property type="term" value="F:hydrogen dehydrogenase (NADP+) activity"/>
    <property type="evidence" value="ECO:0000314"/>
    <property type="project" value="UniProtKB"/>
</dbReference>
<dbReference type="GO" id="GO:0046872">
    <property type="term" value="F:metal ion binding"/>
    <property type="evidence" value="ECO:0007669"/>
    <property type="project" value="UniProtKB-KW"/>
</dbReference>
<dbReference type="GO" id="GO:0008137">
    <property type="term" value="F:NADH dehydrogenase (ubiquinone) activity"/>
    <property type="evidence" value="ECO:0007669"/>
    <property type="project" value="InterPro"/>
</dbReference>
<dbReference type="FunFam" id="1.20.1440.230:FF:000001">
    <property type="entry name" value="Mitochondrial NADH dehydrogenase flavoprotein 1"/>
    <property type="match status" value="1"/>
</dbReference>
<dbReference type="FunFam" id="3.40.50.11540:FF:000001">
    <property type="entry name" value="NADH dehydrogenase [ubiquinone] flavoprotein 1, mitochondrial"/>
    <property type="match status" value="1"/>
</dbReference>
<dbReference type="FunFam" id="3.30.70.20:FF:000054">
    <property type="entry name" value="NADP-reducing hydrogenase subunit HndC"/>
    <property type="match status" value="1"/>
</dbReference>
<dbReference type="Gene3D" id="3.10.20.600">
    <property type="match status" value="1"/>
</dbReference>
<dbReference type="Gene3D" id="3.30.70.20">
    <property type="match status" value="1"/>
</dbReference>
<dbReference type="Gene3D" id="6.10.250.1450">
    <property type="match status" value="1"/>
</dbReference>
<dbReference type="Gene3D" id="3.40.50.11540">
    <property type="entry name" value="NADH-ubiquinone oxidoreductase 51kDa subunit"/>
    <property type="match status" value="1"/>
</dbReference>
<dbReference type="Gene3D" id="1.20.1440.230">
    <property type="entry name" value="NADH-ubiquinone oxidoreductase 51kDa subunit, iron-sulphur binding domain"/>
    <property type="match status" value="1"/>
</dbReference>
<dbReference type="InterPro" id="IPR017896">
    <property type="entry name" value="4Fe4S_Fe-S-bd"/>
</dbReference>
<dbReference type="InterPro" id="IPR017900">
    <property type="entry name" value="4Fe4S_Fe_S_CS"/>
</dbReference>
<dbReference type="InterPro" id="IPR001949">
    <property type="entry name" value="NADH-UbQ_OxRdtase_51kDa_CS"/>
</dbReference>
<dbReference type="InterPro" id="IPR011538">
    <property type="entry name" value="Nuo51_FMN-bd"/>
</dbReference>
<dbReference type="InterPro" id="IPR037225">
    <property type="entry name" value="Nuo51_FMN-bd_sf"/>
</dbReference>
<dbReference type="InterPro" id="IPR019575">
    <property type="entry name" value="Nuop51_4Fe4S-bd"/>
</dbReference>
<dbReference type="InterPro" id="IPR037207">
    <property type="entry name" value="Nuop51_4Fe4S-bd_sf"/>
</dbReference>
<dbReference type="PANTHER" id="PTHR43578">
    <property type="entry name" value="NADH-QUINONE OXIDOREDUCTASE SUBUNIT F"/>
    <property type="match status" value="1"/>
</dbReference>
<dbReference type="PANTHER" id="PTHR43578:SF3">
    <property type="entry name" value="NADH-QUINONE OXIDOREDUCTASE SUBUNIT F"/>
    <property type="match status" value="1"/>
</dbReference>
<dbReference type="Pfam" id="PF01512">
    <property type="entry name" value="Complex1_51K"/>
    <property type="match status" value="1"/>
</dbReference>
<dbReference type="Pfam" id="PF00037">
    <property type="entry name" value="Fer4"/>
    <property type="match status" value="2"/>
</dbReference>
<dbReference type="Pfam" id="PF10589">
    <property type="entry name" value="NADH_4Fe-4S"/>
    <property type="match status" value="1"/>
</dbReference>
<dbReference type="SMART" id="SM00928">
    <property type="entry name" value="NADH_4Fe-4S"/>
    <property type="match status" value="1"/>
</dbReference>
<dbReference type="SUPFAM" id="SSF54862">
    <property type="entry name" value="4Fe-4S ferredoxins"/>
    <property type="match status" value="1"/>
</dbReference>
<dbReference type="SUPFAM" id="SSF142019">
    <property type="entry name" value="Nqo1 FMN-binding domain-like"/>
    <property type="match status" value="1"/>
</dbReference>
<dbReference type="SUPFAM" id="SSF142984">
    <property type="entry name" value="Nqo1 middle domain-like"/>
    <property type="match status" value="1"/>
</dbReference>
<dbReference type="SUPFAM" id="SSF140490">
    <property type="entry name" value="Nqo1C-terminal domain-like"/>
    <property type="match status" value="1"/>
</dbReference>
<dbReference type="PROSITE" id="PS00198">
    <property type="entry name" value="4FE4S_FER_1"/>
    <property type="match status" value="1"/>
</dbReference>
<dbReference type="PROSITE" id="PS51379">
    <property type="entry name" value="4FE4S_FER_2"/>
    <property type="match status" value="2"/>
</dbReference>
<dbReference type="PROSITE" id="PS00645">
    <property type="entry name" value="COMPLEX1_51K_2"/>
    <property type="match status" value="1"/>
</dbReference>
<organism>
    <name type="scientific">Solidesulfovibrio fructosivorans</name>
    <name type="common">Desulfovibrio fructosivorans</name>
    <dbReference type="NCBI Taxonomy" id="878"/>
    <lineage>
        <taxon>Bacteria</taxon>
        <taxon>Pseudomonadati</taxon>
        <taxon>Thermodesulfobacteriota</taxon>
        <taxon>Desulfovibrionia</taxon>
        <taxon>Desulfovibrionales</taxon>
        <taxon>Desulfovibrionaceae</taxon>
        <taxon>Solidesulfovibrio</taxon>
    </lineage>
</organism>
<feature type="chain" id="PRO_0000418717" description="NADP-reducing hydrogenase subunit HndC">
    <location>
        <begin position="1"/>
        <end position="490"/>
    </location>
</feature>
<feature type="domain" description="4Fe-4S ferredoxin-type 1" evidence="1">
    <location>
        <begin position="433"/>
        <end position="462"/>
    </location>
</feature>
<feature type="domain" description="4Fe-4S ferredoxin-type 2" evidence="1">
    <location>
        <begin position="463"/>
        <end position="490"/>
    </location>
</feature>
<keyword id="KW-0004">4Fe-4S</keyword>
<keyword id="KW-0408">Iron</keyword>
<keyword id="KW-0411">Iron-sulfur</keyword>
<keyword id="KW-0479">Metal-binding</keyword>
<keyword id="KW-0521">NADP</keyword>
<keyword id="KW-0560">Oxidoreductase</keyword>
<keyword id="KW-0677">Repeat</keyword>
<proteinExistence type="evidence at protein level"/>
<gene>
    <name type="primary">hndC</name>
</gene>
<reference key="1">
    <citation type="journal article" date="1995" name="J. Bacteriol.">
        <title>Characterization of an operon encoding an NADP-reducing hydrogenase in Desulfovibrio fructosovorans.</title>
        <authorList>
            <person name="Malki S."/>
            <person name="Saimmaime I."/>
            <person name="De Luca G."/>
            <person name="Rousset M."/>
            <person name="Dermoun Z."/>
            <person name="Belaich J.P."/>
        </authorList>
    </citation>
    <scope>NUCLEOTIDE SEQUENCE [GENOMIC DNA]</scope>
    <scope>FUNCTION AS A NADP-REDUCING HYDROGENASE</scope>
    <scope>DISRUPTION PHENOTYPE</scope>
</reference>
<reference key="2">
    <citation type="journal article" date="1998" name="Biochem. Biophys. Res. Commun.">
        <title>The NADP-reducing hydrogenase of Desulfovibrio fructosovorans: evidence for a native complex with hydrogen-dependent methyl-viologen-reducing activity.</title>
        <authorList>
            <person name="de Luca G."/>
            <person name="de Philip P."/>
            <person name="Rousset M."/>
            <person name="Belaich J.P."/>
            <person name="Dermoun Z."/>
        </authorList>
    </citation>
    <scope>FUNCTION AS A NADP-REDUCING HYDROGENASE</scope>
    <scope>CATALYTIC ACTIVITY</scope>
    <scope>BIOPHYSICOCHEMICAL PROPERTIES</scope>
    <scope>ACTIVITY REGULATION</scope>
    <scope>SUBUNIT</scope>
</reference>